<gene>
    <name evidence="1" type="primary">gatD</name>
    <name type="ordered locus">MM_2306</name>
</gene>
<keyword id="KW-0067">ATP-binding</keyword>
<keyword id="KW-0436">Ligase</keyword>
<keyword id="KW-0547">Nucleotide-binding</keyword>
<keyword id="KW-0648">Protein biosynthesis</keyword>
<sequence length="425" mass="45845">MEFKQGDRVRIEKNGTVYEGKVMPSMEGYITIKMKSGYNAGFSIDKVSITPLENNGEAANGGNGGKNGQKEPEPAKEKVSKPGLPKVSILSTGGTIASKIDYRTGAVTSQFTADDILAAIPELKEIADFKGRAISSILSENMDPDSWQNLARAVVEEIEAGADGIIVTHGTDTMMYSAAALSFMIETPVPIVFVGSQRSADRPSSDNAMNAICAARVAISDIAEVVVVMHGTSSDDYCEIHRGTKVRKMHTSRRDAFKSVNSLPIGTVDYDTGEIKTFIEYTGRGEKSLKFKPGMEPKCAIVKFTPGADPSVLDCYVDGGYKGLVLEGTGLGHVSTKWIPFIRRAVDAKMPVIVTSQCLNGRVCDRVYDTGRDMLKAGAIEGEDTLPETALVKLMWVLGQTDEFEKAVSMLGENLSGEINECTLR</sequence>
<protein>
    <recommendedName>
        <fullName evidence="1">Glutamyl-tRNA(Gln) amidotransferase subunit D</fullName>
        <shortName evidence="1">Glu-ADT subunit D</shortName>
        <ecNumber evidence="1">6.3.5.-</ecNumber>
    </recommendedName>
</protein>
<comment type="function">
    <text evidence="1">Allows the formation of correctly charged Gln-tRNA(Gln) through the transamidation of misacylated Glu-tRNA(Gln) in organisms which lack glutaminyl-tRNA synthetase. The reaction takes place in the presence of glutamine and ATP through an activated gamma-phospho-Glu-tRNA(Gln). The GatDE system is specific for glutamate and does not act on aspartate.</text>
</comment>
<comment type="catalytic activity">
    <reaction evidence="1">
        <text>L-glutamyl-tRNA(Gln) + L-glutamine + ATP + H2O = L-glutaminyl-tRNA(Gln) + L-glutamate + ADP + phosphate + H(+)</text>
        <dbReference type="Rhea" id="RHEA:17521"/>
        <dbReference type="Rhea" id="RHEA-COMP:9681"/>
        <dbReference type="Rhea" id="RHEA-COMP:9684"/>
        <dbReference type="ChEBI" id="CHEBI:15377"/>
        <dbReference type="ChEBI" id="CHEBI:15378"/>
        <dbReference type="ChEBI" id="CHEBI:29985"/>
        <dbReference type="ChEBI" id="CHEBI:30616"/>
        <dbReference type="ChEBI" id="CHEBI:43474"/>
        <dbReference type="ChEBI" id="CHEBI:58359"/>
        <dbReference type="ChEBI" id="CHEBI:78520"/>
        <dbReference type="ChEBI" id="CHEBI:78521"/>
        <dbReference type="ChEBI" id="CHEBI:456216"/>
    </reaction>
</comment>
<comment type="subunit">
    <text evidence="1">Heterodimer of GatD and GatE.</text>
</comment>
<comment type="similarity">
    <text evidence="1">Belongs to the asparaginase 1 family. GatD subfamily.</text>
</comment>
<dbReference type="EC" id="6.3.5.-" evidence="1"/>
<dbReference type="EMBL" id="AE008384">
    <property type="protein sequence ID" value="AAM32002.1"/>
    <property type="molecule type" value="Genomic_DNA"/>
</dbReference>
<dbReference type="RefSeq" id="WP_011034230.1">
    <property type="nucleotide sequence ID" value="NC_003901.1"/>
</dbReference>
<dbReference type="SMR" id="Q8PUM7"/>
<dbReference type="GeneID" id="82161379"/>
<dbReference type="KEGG" id="mma:MM_2306"/>
<dbReference type="PATRIC" id="fig|192952.21.peg.2642"/>
<dbReference type="eggNOG" id="arCOG01924">
    <property type="taxonomic scope" value="Archaea"/>
</dbReference>
<dbReference type="HOGENOM" id="CLU_019134_2_1_2"/>
<dbReference type="Proteomes" id="UP000000595">
    <property type="component" value="Chromosome"/>
</dbReference>
<dbReference type="GO" id="GO:0004067">
    <property type="term" value="F:asparaginase activity"/>
    <property type="evidence" value="ECO:0007669"/>
    <property type="project" value="InterPro"/>
</dbReference>
<dbReference type="GO" id="GO:0005524">
    <property type="term" value="F:ATP binding"/>
    <property type="evidence" value="ECO:0007669"/>
    <property type="project" value="UniProtKB-KW"/>
</dbReference>
<dbReference type="GO" id="GO:0050567">
    <property type="term" value="F:glutaminyl-tRNA synthase (glutamine-hydrolyzing) activity"/>
    <property type="evidence" value="ECO:0007669"/>
    <property type="project" value="UniProtKB-UniRule"/>
</dbReference>
<dbReference type="GO" id="GO:0006520">
    <property type="term" value="P:amino acid metabolic process"/>
    <property type="evidence" value="ECO:0007669"/>
    <property type="project" value="InterPro"/>
</dbReference>
<dbReference type="GO" id="GO:0006450">
    <property type="term" value="P:regulation of translational fidelity"/>
    <property type="evidence" value="ECO:0007669"/>
    <property type="project" value="InterPro"/>
</dbReference>
<dbReference type="GO" id="GO:0006412">
    <property type="term" value="P:translation"/>
    <property type="evidence" value="ECO:0007669"/>
    <property type="project" value="UniProtKB-UniRule"/>
</dbReference>
<dbReference type="CDD" id="cd08962">
    <property type="entry name" value="GatD"/>
    <property type="match status" value="1"/>
</dbReference>
<dbReference type="FunFam" id="3.40.50.1170:FF:000001">
    <property type="entry name" value="L-asparaginase 2"/>
    <property type="match status" value="1"/>
</dbReference>
<dbReference type="Gene3D" id="2.30.30.520">
    <property type="match status" value="1"/>
</dbReference>
<dbReference type="Gene3D" id="3.40.50.40">
    <property type="match status" value="1"/>
</dbReference>
<dbReference type="Gene3D" id="3.40.50.1170">
    <property type="entry name" value="L-asparaginase, N-terminal domain"/>
    <property type="match status" value="1"/>
</dbReference>
<dbReference type="HAMAP" id="MF_00586">
    <property type="entry name" value="GatD"/>
    <property type="match status" value="1"/>
</dbReference>
<dbReference type="InterPro" id="IPR006033">
    <property type="entry name" value="AsnA_fam"/>
</dbReference>
<dbReference type="InterPro" id="IPR036152">
    <property type="entry name" value="Asp/glu_Ase-like_sf"/>
</dbReference>
<dbReference type="InterPro" id="IPR006034">
    <property type="entry name" value="Asparaginase/glutaminase-like"/>
</dbReference>
<dbReference type="InterPro" id="IPR020827">
    <property type="entry name" value="Asparaginase/glutaminase_AS1"/>
</dbReference>
<dbReference type="InterPro" id="IPR027475">
    <property type="entry name" value="Asparaginase/glutaminase_AS2"/>
</dbReference>
<dbReference type="InterPro" id="IPR040919">
    <property type="entry name" value="Asparaginase_C"/>
</dbReference>
<dbReference type="InterPro" id="IPR011878">
    <property type="entry name" value="GatD"/>
</dbReference>
<dbReference type="InterPro" id="IPR040918">
    <property type="entry name" value="GatD_N"/>
</dbReference>
<dbReference type="InterPro" id="IPR037222">
    <property type="entry name" value="GatD_N_sf"/>
</dbReference>
<dbReference type="InterPro" id="IPR027473">
    <property type="entry name" value="L-asparaginase_C"/>
</dbReference>
<dbReference type="InterPro" id="IPR027474">
    <property type="entry name" value="L-asparaginase_N"/>
</dbReference>
<dbReference type="InterPro" id="IPR037152">
    <property type="entry name" value="L-asparaginase_N_sf"/>
</dbReference>
<dbReference type="NCBIfam" id="TIGR00519">
    <property type="entry name" value="asnASE_I"/>
    <property type="match status" value="1"/>
</dbReference>
<dbReference type="NCBIfam" id="TIGR02153">
    <property type="entry name" value="gatD_arch"/>
    <property type="match status" value="1"/>
</dbReference>
<dbReference type="NCBIfam" id="NF003217">
    <property type="entry name" value="PRK04183.1"/>
    <property type="match status" value="1"/>
</dbReference>
<dbReference type="PANTHER" id="PTHR11707:SF28">
    <property type="entry name" value="60 KDA LYSOPHOSPHOLIPASE"/>
    <property type="match status" value="1"/>
</dbReference>
<dbReference type="PANTHER" id="PTHR11707">
    <property type="entry name" value="L-ASPARAGINASE"/>
    <property type="match status" value="1"/>
</dbReference>
<dbReference type="Pfam" id="PF00710">
    <property type="entry name" value="Asparaginase"/>
    <property type="match status" value="1"/>
</dbReference>
<dbReference type="Pfam" id="PF17763">
    <property type="entry name" value="Asparaginase_C"/>
    <property type="match status" value="1"/>
</dbReference>
<dbReference type="Pfam" id="PF18195">
    <property type="entry name" value="GatD_N"/>
    <property type="match status" value="1"/>
</dbReference>
<dbReference type="PIRSF" id="PIRSF500175">
    <property type="entry name" value="Glu_ADT_D"/>
    <property type="match status" value="1"/>
</dbReference>
<dbReference type="PIRSF" id="PIRSF001220">
    <property type="entry name" value="L-ASNase_gatD"/>
    <property type="match status" value="1"/>
</dbReference>
<dbReference type="PRINTS" id="PR00139">
    <property type="entry name" value="ASNGLNASE"/>
</dbReference>
<dbReference type="SMART" id="SM00870">
    <property type="entry name" value="Asparaginase"/>
    <property type="match status" value="1"/>
</dbReference>
<dbReference type="SUPFAM" id="SSF141300">
    <property type="entry name" value="GatD N-terminal domain-like"/>
    <property type="match status" value="1"/>
</dbReference>
<dbReference type="SUPFAM" id="SSF53774">
    <property type="entry name" value="Glutaminase/Asparaginase"/>
    <property type="match status" value="1"/>
</dbReference>
<dbReference type="PROSITE" id="PS00144">
    <property type="entry name" value="ASN_GLN_ASE_1"/>
    <property type="match status" value="1"/>
</dbReference>
<dbReference type="PROSITE" id="PS00917">
    <property type="entry name" value="ASN_GLN_ASE_2"/>
    <property type="match status" value="1"/>
</dbReference>
<dbReference type="PROSITE" id="PS51732">
    <property type="entry name" value="ASN_GLN_ASE_3"/>
    <property type="match status" value="1"/>
</dbReference>
<proteinExistence type="inferred from homology"/>
<name>GATD_METMA</name>
<reference key="1">
    <citation type="journal article" date="2002" name="J. Mol. Microbiol. Biotechnol.">
        <title>The genome of Methanosarcina mazei: evidence for lateral gene transfer between Bacteria and Archaea.</title>
        <authorList>
            <person name="Deppenmeier U."/>
            <person name="Johann A."/>
            <person name="Hartsch T."/>
            <person name="Merkl R."/>
            <person name="Schmitz R.A."/>
            <person name="Martinez-Arias R."/>
            <person name="Henne A."/>
            <person name="Wiezer A."/>
            <person name="Baeumer S."/>
            <person name="Jacobi C."/>
            <person name="Brueggemann H."/>
            <person name="Lienard T."/>
            <person name="Christmann A."/>
            <person name="Boemecke M."/>
            <person name="Steckel S."/>
            <person name="Bhattacharyya A."/>
            <person name="Lykidis A."/>
            <person name="Overbeek R."/>
            <person name="Klenk H.-P."/>
            <person name="Gunsalus R.P."/>
            <person name="Fritz H.-J."/>
            <person name="Gottschalk G."/>
        </authorList>
    </citation>
    <scope>NUCLEOTIDE SEQUENCE [LARGE SCALE GENOMIC DNA]</scope>
    <source>
        <strain>ATCC BAA-159 / DSM 3647 / Goe1 / Go1 / JCM 11833 / OCM 88</strain>
    </source>
</reference>
<accession>Q8PUM7</accession>
<evidence type="ECO:0000255" key="1">
    <source>
        <dbReference type="HAMAP-Rule" id="MF_00586"/>
    </source>
</evidence>
<evidence type="ECO:0000255" key="2">
    <source>
        <dbReference type="PROSITE-ProRule" id="PRU01068"/>
    </source>
</evidence>
<evidence type="ECO:0000256" key="3">
    <source>
        <dbReference type="SAM" id="MobiDB-lite"/>
    </source>
</evidence>
<feature type="chain" id="PRO_0000140054" description="Glutamyl-tRNA(Gln) amidotransferase subunit D">
    <location>
        <begin position="1"/>
        <end position="425"/>
    </location>
</feature>
<feature type="domain" description="Asparaginase/glutaminase" evidence="2">
    <location>
        <begin position="85"/>
        <end position="414"/>
    </location>
</feature>
<feature type="region of interest" description="Disordered" evidence="3">
    <location>
        <begin position="53"/>
        <end position="84"/>
    </location>
</feature>
<feature type="compositionally biased region" description="Basic and acidic residues" evidence="3">
    <location>
        <begin position="68"/>
        <end position="80"/>
    </location>
</feature>
<feature type="active site" evidence="1">
    <location>
        <position position="95"/>
    </location>
</feature>
<feature type="active site" evidence="1">
    <location>
        <position position="171"/>
    </location>
</feature>
<feature type="active site" evidence="1">
    <location>
        <position position="172"/>
    </location>
</feature>
<feature type="active site" evidence="1">
    <location>
        <position position="248"/>
    </location>
</feature>
<organism>
    <name type="scientific">Methanosarcina mazei (strain ATCC BAA-159 / DSM 3647 / Goe1 / Go1 / JCM 11833 / OCM 88)</name>
    <name type="common">Methanosarcina frisia</name>
    <dbReference type="NCBI Taxonomy" id="192952"/>
    <lineage>
        <taxon>Archaea</taxon>
        <taxon>Methanobacteriati</taxon>
        <taxon>Methanobacteriota</taxon>
        <taxon>Stenosarchaea group</taxon>
        <taxon>Methanomicrobia</taxon>
        <taxon>Methanosarcinales</taxon>
        <taxon>Methanosarcinaceae</taxon>
        <taxon>Methanosarcina</taxon>
    </lineage>
</organism>